<reference key="1">
    <citation type="submission" date="2008-02" db="EMBL/GenBank/DDBJ databases">
        <title>Trichophyton rubrum secreted neutral proteases II.</title>
        <authorList>
            <person name="Monod M."/>
            <person name="Lechenne B."/>
            <person name="Zaugg C."/>
        </authorList>
    </citation>
    <scope>NUCLEOTIDE SEQUENCE [GENOMIC DNA]</scope>
</reference>
<sequence length="360" mass="38803">MQFTALLAALGAPLALAASIPAAAHNHTMIDVQLAATGNSMIKATITNTGDRTLNLLKFNTIMDEHPTRKVMVYQDGAEVQFTGMLPRYKMSDLTPEYFVNLGPKASVEHSFDLAATHDLSRGGKITVKAHGMVPTAEENATTITGHTLYESNELTMDVDGKQAAAVEQAMGGDDSTGVIDKRSNIVTSSCRGSQLRVLQTALSNASRLSRAAASAAQRNPSKMREYFKTADKPHRPEGASRFLSVARESSSGSTGRTTYYCNDNRGGCHPGVLAYTLPSRNQVFNCPSYYQLPALNNRCHGQDQATTTLHELTHNPAVVTPFCEDLGYGYQRVSALPASKAIQNADTYSLFANAIYLGC</sequence>
<feature type="signal peptide" evidence="3">
    <location>
        <begin position="1"/>
        <end position="17"/>
    </location>
</feature>
<feature type="propeptide" id="PRO_0000388462" evidence="1">
    <location>
        <begin position="18"/>
        <end position="183"/>
    </location>
</feature>
<feature type="chain" id="PRO_0000388463" description="Probable neutral protease 2 homolog A">
    <location>
        <begin position="184"/>
        <end position="360"/>
    </location>
</feature>
<feature type="active site" evidence="4">
    <location>
        <position position="312"/>
    </location>
</feature>
<feature type="binding site" evidence="4">
    <location>
        <position position="311"/>
    </location>
    <ligand>
        <name>Zn(2+)</name>
        <dbReference type="ChEBI" id="CHEBI:29105"/>
        <note>catalytic</note>
    </ligand>
</feature>
<feature type="binding site" evidence="4">
    <location>
        <position position="315"/>
    </location>
    <ligand>
        <name>Zn(2+)</name>
        <dbReference type="ChEBI" id="CHEBI:29105"/>
        <note>catalytic</note>
    </ligand>
</feature>
<feature type="binding site" evidence="4">
    <location>
        <position position="326"/>
    </location>
    <ligand>
        <name>Zn(2+)</name>
        <dbReference type="ChEBI" id="CHEBI:29105"/>
        <note>catalytic</note>
    </ligand>
</feature>
<feature type="glycosylation site" description="N-linked (GlcNAc...) asparagine" evidence="3">
    <location>
        <position position="205"/>
    </location>
</feature>
<feature type="disulfide bond" evidence="2">
    <location>
        <begin position="191"/>
        <end position="262"/>
    </location>
</feature>
<feature type="disulfide bond" evidence="2">
    <location>
        <begin position="269"/>
        <end position="287"/>
    </location>
</feature>
<feature type="disulfide bond" evidence="2">
    <location>
        <begin position="300"/>
        <end position="360"/>
    </location>
</feature>
<protein>
    <recommendedName>
        <fullName>Probable neutral protease 2 homolog A</fullName>
        <ecNumber>3.4.24.39</ecNumber>
    </recommendedName>
    <alternativeName>
        <fullName>Deuterolysin A</fullName>
    </alternativeName>
</protein>
<name>NPIIA_TRIRU</name>
<accession>C0IPP1</accession>
<evidence type="ECO:0000250" key="1"/>
<evidence type="ECO:0000250" key="2">
    <source>
        <dbReference type="UniProtKB" id="P46076"/>
    </source>
</evidence>
<evidence type="ECO:0000255" key="3"/>
<evidence type="ECO:0000255" key="4">
    <source>
        <dbReference type="PROSITE-ProRule" id="PRU10095"/>
    </source>
</evidence>
<evidence type="ECO:0000305" key="5"/>
<organism>
    <name type="scientific">Trichophyton rubrum</name>
    <name type="common">Athlete's foot fungus</name>
    <name type="synonym">Epidermophyton rubrum</name>
    <dbReference type="NCBI Taxonomy" id="5551"/>
    <lineage>
        <taxon>Eukaryota</taxon>
        <taxon>Fungi</taxon>
        <taxon>Dikarya</taxon>
        <taxon>Ascomycota</taxon>
        <taxon>Pezizomycotina</taxon>
        <taxon>Eurotiomycetes</taxon>
        <taxon>Eurotiomycetidae</taxon>
        <taxon>Onygenales</taxon>
        <taxon>Arthrodermataceae</taxon>
        <taxon>Trichophyton</taxon>
    </lineage>
</organism>
<keyword id="KW-0165">Cleavage on pair of basic residues</keyword>
<keyword id="KW-1015">Disulfide bond</keyword>
<keyword id="KW-0325">Glycoprotein</keyword>
<keyword id="KW-0378">Hydrolase</keyword>
<keyword id="KW-0479">Metal-binding</keyword>
<keyword id="KW-0482">Metalloprotease</keyword>
<keyword id="KW-0645">Protease</keyword>
<keyword id="KW-0964">Secreted</keyword>
<keyword id="KW-0732">Signal</keyword>
<keyword id="KW-0843">Virulence</keyword>
<keyword id="KW-0862">Zinc</keyword>
<keyword id="KW-0865">Zymogen</keyword>
<proteinExistence type="inferred from homology"/>
<gene>
    <name type="primary">NpII-A</name>
</gene>
<comment type="function">
    <text evidence="1">Probable secreted metalloprotease that shows high activities on basic nuclear substrates such as histone and protamine (By similarity). May be involved in virulence.</text>
</comment>
<comment type="catalytic activity">
    <reaction>
        <text>Preferential cleavage of bonds with hydrophobic residues in P1'. Also 3-Asn-|-Gln-4 and 8-Gly-|-Ser-9 bonds in insulin B chain.</text>
        <dbReference type="EC" id="3.4.24.39"/>
    </reaction>
</comment>
<comment type="cofactor">
    <cofactor evidence="2">
        <name>Zn(2+)</name>
        <dbReference type="ChEBI" id="CHEBI:29105"/>
    </cofactor>
    <text evidence="2">Binds 1 zinc ion per subunit.</text>
</comment>
<comment type="subcellular location">
    <subcellularLocation>
        <location evidence="5">Secreted</location>
    </subcellularLocation>
</comment>
<comment type="similarity">
    <text evidence="5">Belongs to the peptidase M35 family.</text>
</comment>
<dbReference type="EC" id="3.4.24.39"/>
<dbReference type="EMBL" id="EU445234">
    <property type="protein sequence ID" value="ACC65885.1"/>
    <property type="molecule type" value="Genomic_DNA"/>
</dbReference>
<dbReference type="SMR" id="C0IPP1"/>
<dbReference type="MEROPS" id="M35.001"/>
<dbReference type="GlyCosmos" id="C0IPP1">
    <property type="glycosylation" value="1 site, No reported glycans"/>
</dbReference>
<dbReference type="VEuPathDB" id="FungiDB:TERG_03599"/>
<dbReference type="GO" id="GO:0005576">
    <property type="term" value="C:extracellular region"/>
    <property type="evidence" value="ECO:0007669"/>
    <property type="project" value="UniProtKB-SubCell"/>
</dbReference>
<dbReference type="GO" id="GO:0046872">
    <property type="term" value="F:metal ion binding"/>
    <property type="evidence" value="ECO:0007669"/>
    <property type="project" value="UniProtKB-KW"/>
</dbReference>
<dbReference type="GO" id="GO:0004222">
    <property type="term" value="F:metalloendopeptidase activity"/>
    <property type="evidence" value="ECO:0007669"/>
    <property type="project" value="InterPro"/>
</dbReference>
<dbReference type="GO" id="GO:0006508">
    <property type="term" value="P:proteolysis"/>
    <property type="evidence" value="ECO:0007669"/>
    <property type="project" value="UniProtKB-KW"/>
</dbReference>
<dbReference type="CDD" id="cd11008">
    <property type="entry name" value="M35_deuterolysin_like"/>
    <property type="match status" value="1"/>
</dbReference>
<dbReference type="Gene3D" id="2.60.40.2970">
    <property type="match status" value="1"/>
</dbReference>
<dbReference type="Gene3D" id="3.40.390.10">
    <property type="entry name" value="Collagenase (Catalytic Domain)"/>
    <property type="match status" value="1"/>
</dbReference>
<dbReference type="InterPro" id="IPR050414">
    <property type="entry name" value="Fungal_M35_metalloproteases"/>
</dbReference>
<dbReference type="InterPro" id="IPR024079">
    <property type="entry name" value="MetalloPept_cat_dom_sf"/>
</dbReference>
<dbReference type="InterPro" id="IPR001384">
    <property type="entry name" value="Peptidase_M35"/>
</dbReference>
<dbReference type="PANTHER" id="PTHR37016">
    <property type="match status" value="1"/>
</dbReference>
<dbReference type="PANTHER" id="PTHR37016:SF3">
    <property type="entry name" value="NEUTRAL PROTEASE 2-RELATED"/>
    <property type="match status" value="1"/>
</dbReference>
<dbReference type="Pfam" id="PF02102">
    <property type="entry name" value="Peptidase_M35"/>
    <property type="match status" value="1"/>
</dbReference>
<dbReference type="PRINTS" id="PR00768">
    <property type="entry name" value="DEUTEROLYSIN"/>
</dbReference>
<dbReference type="SUPFAM" id="SSF55486">
    <property type="entry name" value="Metalloproteases ('zincins'), catalytic domain"/>
    <property type="match status" value="1"/>
</dbReference>
<dbReference type="PROSITE" id="PS00142">
    <property type="entry name" value="ZINC_PROTEASE"/>
    <property type="match status" value="1"/>
</dbReference>